<proteinExistence type="inferred from homology"/>
<evidence type="ECO:0000255" key="1">
    <source>
        <dbReference type="HAMAP-Rule" id="MF_00152"/>
    </source>
</evidence>
<reference key="1">
    <citation type="journal article" date="2011" name="J. Bacteriol.">
        <title>Comparative genomics of 28 Salmonella enterica isolates: evidence for CRISPR-mediated adaptive sublineage evolution.</title>
        <authorList>
            <person name="Fricke W.F."/>
            <person name="Mammel M.K."/>
            <person name="McDermott P.F."/>
            <person name="Tartera C."/>
            <person name="White D.G."/>
            <person name="Leclerc J.E."/>
            <person name="Ravel J."/>
            <person name="Cebula T.A."/>
        </authorList>
    </citation>
    <scope>NUCLEOTIDE SEQUENCE [LARGE SCALE GENOMIC DNA]</scope>
    <source>
        <strain>SL476</strain>
    </source>
</reference>
<gene>
    <name evidence="1" type="primary">nfo</name>
    <name type="ordered locus">SeHA_C2439</name>
</gene>
<dbReference type="EC" id="3.1.21.2" evidence="1"/>
<dbReference type="EMBL" id="CP001120">
    <property type="protein sequence ID" value="ACF66308.1"/>
    <property type="molecule type" value="Genomic_DNA"/>
</dbReference>
<dbReference type="RefSeq" id="WP_000873906.1">
    <property type="nucleotide sequence ID" value="NC_011083.1"/>
</dbReference>
<dbReference type="SMR" id="B4TAM6"/>
<dbReference type="KEGG" id="seh:SeHA_C2439"/>
<dbReference type="HOGENOM" id="CLU_025885_0_4_6"/>
<dbReference type="Proteomes" id="UP000001866">
    <property type="component" value="Chromosome"/>
</dbReference>
<dbReference type="GO" id="GO:0008833">
    <property type="term" value="F:deoxyribonuclease IV (phage-T4-induced) activity"/>
    <property type="evidence" value="ECO:0007669"/>
    <property type="project" value="UniProtKB-UniRule"/>
</dbReference>
<dbReference type="GO" id="GO:0003677">
    <property type="term" value="F:DNA binding"/>
    <property type="evidence" value="ECO:0007669"/>
    <property type="project" value="InterPro"/>
</dbReference>
<dbReference type="GO" id="GO:0003906">
    <property type="term" value="F:DNA-(apurinic or apyrimidinic site) endonuclease activity"/>
    <property type="evidence" value="ECO:0007669"/>
    <property type="project" value="TreeGrafter"/>
</dbReference>
<dbReference type="GO" id="GO:0008081">
    <property type="term" value="F:phosphoric diester hydrolase activity"/>
    <property type="evidence" value="ECO:0007669"/>
    <property type="project" value="TreeGrafter"/>
</dbReference>
<dbReference type="GO" id="GO:0008270">
    <property type="term" value="F:zinc ion binding"/>
    <property type="evidence" value="ECO:0007669"/>
    <property type="project" value="UniProtKB-UniRule"/>
</dbReference>
<dbReference type="GO" id="GO:0006284">
    <property type="term" value="P:base-excision repair"/>
    <property type="evidence" value="ECO:0007669"/>
    <property type="project" value="TreeGrafter"/>
</dbReference>
<dbReference type="CDD" id="cd00019">
    <property type="entry name" value="AP2Ec"/>
    <property type="match status" value="1"/>
</dbReference>
<dbReference type="FunFam" id="3.20.20.150:FF:000001">
    <property type="entry name" value="Probable endonuclease 4"/>
    <property type="match status" value="1"/>
</dbReference>
<dbReference type="Gene3D" id="3.20.20.150">
    <property type="entry name" value="Divalent-metal-dependent TIM barrel enzymes"/>
    <property type="match status" value="1"/>
</dbReference>
<dbReference type="HAMAP" id="MF_00152">
    <property type="entry name" value="Nfo"/>
    <property type="match status" value="1"/>
</dbReference>
<dbReference type="InterPro" id="IPR001719">
    <property type="entry name" value="AP_endonuc_2"/>
</dbReference>
<dbReference type="InterPro" id="IPR018246">
    <property type="entry name" value="AP_endonuc_F2_Zn_BS"/>
</dbReference>
<dbReference type="InterPro" id="IPR036237">
    <property type="entry name" value="Xyl_isomerase-like_sf"/>
</dbReference>
<dbReference type="InterPro" id="IPR013022">
    <property type="entry name" value="Xyl_isomerase-like_TIM-brl"/>
</dbReference>
<dbReference type="NCBIfam" id="TIGR00587">
    <property type="entry name" value="nfo"/>
    <property type="match status" value="1"/>
</dbReference>
<dbReference type="NCBIfam" id="NF002199">
    <property type="entry name" value="PRK01060.1-4"/>
    <property type="match status" value="1"/>
</dbReference>
<dbReference type="PANTHER" id="PTHR21445:SF0">
    <property type="entry name" value="APURINIC-APYRIMIDINIC ENDONUCLEASE"/>
    <property type="match status" value="1"/>
</dbReference>
<dbReference type="PANTHER" id="PTHR21445">
    <property type="entry name" value="ENDONUCLEASE IV ENDODEOXYRIBONUCLEASE IV"/>
    <property type="match status" value="1"/>
</dbReference>
<dbReference type="Pfam" id="PF01261">
    <property type="entry name" value="AP_endonuc_2"/>
    <property type="match status" value="1"/>
</dbReference>
<dbReference type="SMART" id="SM00518">
    <property type="entry name" value="AP2Ec"/>
    <property type="match status" value="1"/>
</dbReference>
<dbReference type="SUPFAM" id="SSF51658">
    <property type="entry name" value="Xylose isomerase-like"/>
    <property type="match status" value="1"/>
</dbReference>
<dbReference type="PROSITE" id="PS00729">
    <property type="entry name" value="AP_NUCLEASE_F2_1"/>
    <property type="match status" value="1"/>
</dbReference>
<dbReference type="PROSITE" id="PS00730">
    <property type="entry name" value="AP_NUCLEASE_F2_2"/>
    <property type="match status" value="1"/>
</dbReference>
<dbReference type="PROSITE" id="PS00731">
    <property type="entry name" value="AP_NUCLEASE_F2_3"/>
    <property type="match status" value="1"/>
</dbReference>
<dbReference type="PROSITE" id="PS51432">
    <property type="entry name" value="AP_NUCLEASE_F2_4"/>
    <property type="match status" value="1"/>
</dbReference>
<name>END4_SALHS</name>
<accession>B4TAM6</accession>
<organism>
    <name type="scientific">Salmonella heidelberg (strain SL476)</name>
    <dbReference type="NCBI Taxonomy" id="454169"/>
    <lineage>
        <taxon>Bacteria</taxon>
        <taxon>Pseudomonadati</taxon>
        <taxon>Pseudomonadota</taxon>
        <taxon>Gammaproteobacteria</taxon>
        <taxon>Enterobacterales</taxon>
        <taxon>Enterobacteriaceae</taxon>
        <taxon>Salmonella</taxon>
    </lineage>
</organism>
<protein>
    <recommendedName>
        <fullName evidence="1">Probable endonuclease 4</fullName>
        <ecNumber evidence="1">3.1.21.2</ecNumber>
    </recommendedName>
    <alternativeName>
        <fullName evidence="1">Endodeoxyribonuclease IV</fullName>
    </alternativeName>
    <alternativeName>
        <fullName evidence="1">Endonuclease IV</fullName>
    </alternativeName>
</protein>
<comment type="function">
    <text evidence="1">Endonuclease IV plays a role in DNA repair. It cleaves phosphodiester bonds at apurinic or apyrimidinic (AP) sites, generating a 3'-hydroxyl group and a 5'-terminal sugar phosphate.</text>
</comment>
<comment type="catalytic activity">
    <reaction evidence="1">
        <text>Endonucleolytic cleavage to 5'-phosphooligonucleotide end-products.</text>
        <dbReference type="EC" id="3.1.21.2"/>
    </reaction>
</comment>
<comment type="cofactor">
    <cofactor evidence="1">
        <name>Zn(2+)</name>
        <dbReference type="ChEBI" id="CHEBI:29105"/>
    </cofactor>
    <text evidence="1">Binds 3 Zn(2+) ions.</text>
</comment>
<comment type="similarity">
    <text evidence="1">Belongs to the AP endonuclease 2 family.</text>
</comment>
<sequence length="285" mass="31178">MKYIGAHVSAAGGLANAPARAAEIGATAFALFTKNQRQWRAAPLTPQVIDDFKIACEKYHFSAAQILPHDSYLINLGHPVSEALEKSRDAFLDEMQRCEQLGLTLLNFHPGSHLMQIAQEDCLARIAESINIALAQTEGVTAVIENTAGQGSNLGFEFEQLAAIIDGVEDKSRVGVCIDTCHAFAAGYDLRTPEACEKTFAEFGKIVGFQYLRGMHLNDAKSAFGSRVDRHHSLGEGNIGHDAFRWIMQDARFDGIPLILETINPDIWAEEIAWLKAQQIAEAVA</sequence>
<feature type="chain" id="PRO_1000096902" description="Probable endonuclease 4">
    <location>
        <begin position="1"/>
        <end position="285"/>
    </location>
</feature>
<feature type="binding site" evidence="1">
    <location>
        <position position="69"/>
    </location>
    <ligand>
        <name>Zn(2+)</name>
        <dbReference type="ChEBI" id="CHEBI:29105"/>
        <label>1</label>
    </ligand>
</feature>
<feature type="binding site" evidence="1">
    <location>
        <position position="109"/>
    </location>
    <ligand>
        <name>Zn(2+)</name>
        <dbReference type="ChEBI" id="CHEBI:29105"/>
        <label>1</label>
    </ligand>
</feature>
<feature type="binding site" evidence="1">
    <location>
        <position position="145"/>
    </location>
    <ligand>
        <name>Zn(2+)</name>
        <dbReference type="ChEBI" id="CHEBI:29105"/>
        <label>1</label>
    </ligand>
</feature>
<feature type="binding site" evidence="1">
    <location>
        <position position="145"/>
    </location>
    <ligand>
        <name>Zn(2+)</name>
        <dbReference type="ChEBI" id="CHEBI:29105"/>
        <label>2</label>
    </ligand>
</feature>
<feature type="binding site" evidence="1">
    <location>
        <position position="179"/>
    </location>
    <ligand>
        <name>Zn(2+)</name>
        <dbReference type="ChEBI" id="CHEBI:29105"/>
        <label>2</label>
    </ligand>
</feature>
<feature type="binding site" evidence="1">
    <location>
        <position position="182"/>
    </location>
    <ligand>
        <name>Zn(2+)</name>
        <dbReference type="ChEBI" id="CHEBI:29105"/>
        <label>3</label>
    </ligand>
</feature>
<feature type="binding site" evidence="1">
    <location>
        <position position="216"/>
    </location>
    <ligand>
        <name>Zn(2+)</name>
        <dbReference type="ChEBI" id="CHEBI:29105"/>
        <label>2</label>
    </ligand>
</feature>
<feature type="binding site" evidence="1">
    <location>
        <position position="229"/>
    </location>
    <ligand>
        <name>Zn(2+)</name>
        <dbReference type="ChEBI" id="CHEBI:29105"/>
        <label>3</label>
    </ligand>
</feature>
<feature type="binding site" evidence="1">
    <location>
        <position position="231"/>
    </location>
    <ligand>
        <name>Zn(2+)</name>
        <dbReference type="ChEBI" id="CHEBI:29105"/>
        <label>3</label>
    </ligand>
</feature>
<feature type="binding site" evidence="1">
    <location>
        <position position="261"/>
    </location>
    <ligand>
        <name>Zn(2+)</name>
        <dbReference type="ChEBI" id="CHEBI:29105"/>
        <label>2</label>
    </ligand>
</feature>
<keyword id="KW-0227">DNA damage</keyword>
<keyword id="KW-0234">DNA repair</keyword>
<keyword id="KW-0255">Endonuclease</keyword>
<keyword id="KW-0378">Hydrolase</keyword>
<keyword id="KW-0479">Metal-binding</keyword>
<keyword id="KW-0540">Nuclease</keyword>
<keyword id="KW-0862">Zinc</keyword>